<evidence type="ECO:0000250" key="1"/>
<evidence type="ECO:0000256" key="2">
    <source>
        <dbReference type="SAM" id="MobiDB-lite"/>
    </source>
</evidence>
<evidence type="ECO:0000305" key="3"/>
<reference key="1">
    <citation type="journal article" date="2005" name="Nature">
        <title>Genomic sequence of the pathogenic and allergenic filamentous fungus Aspergillus fumigatus.</title>
        <authorList>
            <person name="Nierman W.C."/>
            <person name="Pain A."/>
            <person name="Anderson M.J."/>
            <person name="Wortman J.R."/>
            <person name="Kim H.S."/>
            <person name="Arroyo J."/>
            <person name="Berriman M."/>
            <person name="Abe K."/>
            <person name="Archer D.B."/>
            <person name="Bermejo C."/>
            <person name="Bennett J.W."/>
            <person name="Bowyer P."/>
            <person name="Chen D."/>
            <person name="Collins M."/>
            <person name="Coulsen R."/>
            <person name="Davies R."/>
            <person name="Dyer P.S."/>
            <person name="Farman M.L."/>
            <person name="Fedorova N."/>
            <person name="Fedorova N.D."/>
            <person name="Feldblyum T.V."/>
            <person name="Fischer R."/>
            <person name="Fosker N."/>
            <person name="Fraser A."/>
            <person name="Garcia J.L."/>
            <person name="Garcia M.J."/>
            <person name="Goble A."/>
            <person name="Goldman G.H."/>
            <person name="Gomi K."/>
            <person name="Griffith-Jones S."/>
            <person name="Gwilliam R."/>
            <person name="Haas B.J."/>
            <person name="Haas H."/>
            <person name="Harris D.E."/>
            <person name="Horiuchi H."/>
            <person name="Huang J."/>
            <person name="Humphray S."/>
            <person name="Jimenez J."/>
            <person name="Keller N."/>
            <person name="Khouri H."/>
            <person name="Kitamoto K."/>
            <person name="Kobayashi T."/>
            <person name="Konzack S."/>
            <person name="Kulkarni R."/>
            <person name="Kumagai T."/>
            <person name="Lafton A."/>
            <person name="Latge J.-P."/>
            <person name="Li W."/>
            <person name="Lord A."/>
            <person name="Lu C."/>
            <person name="Majoros W.H."/>
            <person name="May G.S."/>
            <person name="Miller B.L."/>
            <person name="Mohamoud Y."/>
            <person name="Molina M."/>
            <person name="Monod M."/>
            <person name="Mouyna I."/>
            <person name="Mulligan S."/>
            <person name="Murphy L.D."/>
            <person name="O'Neil S."/>
            <person name="Paulsen I."/>
            <person name="Penalva M.A."/>
            <person name="Pertea M."/>
            <person name="Price C."/>
            <person name="Pritchard B.L."/>
            <person name="Quail M.A."/>
            <person name="Rabbinowitsch E."/>
            <person name="Rawlins N."/>
            <person name="Rajandream M.A."/>
            <person name="Reichard U."/>
            <person name="Renauld H."/>
            <person name="Robson G.D."/>
            <person name="Rodriguez de Cordoba S."/>
            <person name="Rodriguez-Pena J.M."/>
            <person name="Ronning C.M."/>
            <person name="Rutter S."/>
            <person name="Salzberg S.L."/>
            <person name="Sanchez M."/>
            <person name="Sanchez-Ferrero J.C."/>
            <person name="Saunders D."/>
            <person name="Seeger K."/>
            <person name="Squares R."/>
            <person name="Squares S."/>
            <person name="Takeuchi M."/>
            <person name="Tekaia F."/>
            <person name="Turner G."/>
            <person name="Vazquez de Aldana C.R."/>
            <person name="Weidman J."/>
            <person name="White O."/>
            <person name="Woodward J.R."/>
            <person name="Yu J.-H."/>
            <person name="Fraser C.M."/>
            <person name="Galagan J.E."/>
            <person name="Asai K."/>
            <person name="Machida M."/>
            <person name="Hall N."/>
            <person name="Barrell B.G."/>
            <person name="Denning D.W."/>
        </authorList>
    </citation>
    <scope>NUCLEOTIDE SEQUENCE [LARGE SCALE GENOMIC DNA]</scope>
    <source>
        <strain>ATCC MYA-4609 / CBS 101355 / FGSC A1100 / Af293</strain>
    </source>
</reference>
<comment type="function">
    <text evidence="1">Pre-mRNA polyadenylation factor that directly interacts with poly(A) polymerase.</text>
</comment>
<comment type="subcellular location">
    <subcellularLocation>
        <location evidence="1">Nucleus</location>
    </subcellularLocation>
</comment>
<comment type="similarity">
    <text evidence="3">Belongs to the FIP1 family.</text>
</comment>
<feature type="chain" id="PRO_0000238508" description="Pre-mRNA polyadenylation factor fip1">
    <location>
        <begin position="1"/>
        <end position="338"/>
    </location>
</feature>
<feature type="region of interest" description="Disordered" evidence="2">
    <location>
        <begin position="1"/>
        <end position="169"/>
    </location>
</feature>
<feature type="region of interest" description="Disordered" evidence="2">
    <location>
        <begin position="282"/>
        <end position="338"/>
    </location>
</feature>
<feature type="compositionally biased region" description="Acidic residues" evidence="2">
    <location>
        <begin position="1"/>
        <end position="12"/>
    </location>
</feature>
<feature type="compositionally biased region" description="Polar residues" evidence="2">
    <location>
        <begin position="20"/>
        <end position="31"/>
    </location>
</feature>
<feature type="compositionally biased region" description="Acidic residues" evidence="2">
    <location>
        <begin position="38"/>
        <end position="56"/>
    </location>
</feature>
<feature type="compositionally biased region" description="Polar residues" evidence="2">
    <location>
        <begin position="85"/>
        <end position="100"/>
    </location>
</feature>
<feature type="compositionally biased region" description="Low complexity" evidence="2">
    <location>
        <begin position="106"/>
        <end position="118"/>
    </location>
</feature>
<feature type="compositionally biased region" description="Gly residues" evidence="2">
    <location>
        <begin position="283"/>
        <end position="332"/>
    </location>
</feature>
<organism>
    <name type="scientific">Aspergillus fumigatus (strain ATCC MYA-4609 / CBS 101355 / FGSC A1100 / Af293)</name>
    <name type="common">Neosartorya fumigata</name>
    <dbReference type="NCBI Taxonomy" id="330879"/>
    <lineage>
        <taxon>Eukaryota</taxon>
        <taxon>Fungi</taxon>
        <taxon>Dikarya</taxon>
        <taxon>Ascomycota</taxon>
        <taxon>Pezizomycotina</taxon>
        <taxon>Eurotiomycetes</taxon>
        <taxon>Eurotiomycetidae</taxon>
        <taxon>Eurotiales</taxon>
        <taxon>Aspergillaceae</taxon>
        <taxon>Aspergillus</taxon>
        <taxon>Aspergillus subgen. Fumigati</taxon>
    </lineage>
</organism>
<proteinExistence type="inferred from homology"/>
<protein>
    <recommendedName>
        <fullName>Pre-mRNA polyadenylation factor fip1</fullName>
    </recommendedName>
</protein>
<accession>Q4WM95</accession>
<sequence length="338" mass="36181">MMMEDDDDDFYDPADAVPINQAQDAPQNQSNEKSQELNEGEEQEEEIEVEEDEDDFNIITEAPPDAPPPEVPHPRHANLRAEPQRPSSADISTKSVTPTVTPKLEAATPAPASARPTAPQKPGSAYPPVQASTIDVNANPVHPSTGKPILSTDMDSDFPTEDDKPWRRPGSDISDYFNYGFDEFTWASYVLKQQELRKEVQDQKKQLDDMQNFLTMGLPPIPGAPGPAAPPGSAPPALPGMPGMPDIAPDMMQGMLASMMSQGMDPSSMDPMSFMQHAQAMMGGQGGAGAGQQQGQPGFGGQSQNSGFGGQGGGQPHMGFGGYDQRGGFGGRGRGRRW</sequence>
<dbReference type="EMBL" id="AAHF01000006">
    <property type="protein sequence ID" value="EAL88919.1"/>
    <property type="molecule type" value="Genomic_DNA"/>
</dbReference>
<dbReference type="RefSeq" id="XP_750957.1">
    <property type="nucleotide sequence ID" value="XM_745864.1"/>
</dbReference>
<dbReference type="SMR" id="Q4WM95"/>
<dbReference type="STRING" id="330879.Q4WM95"/>
<dbReference type="EnsemblFungi" id="EAL88919">
    <property type="protein sequence ID" value="EAL88919"/>
    <property type="gene ID" value="AFUA_6G10690"/>
</dbReference>
<dbReference type="GeneID" id="3508262"/>
<dbReference type="KEGG" id="afm:AFUA_6G10690"/>
<dbReference type="VEuPathDB" id="FungiDB:Afu6g10690"/>
<dbReference type="eggNOG" id="KOG1049">
    <property type="taxonomic scope" value="Eukaryota"/>
</dbReference>
<dbReference type="HOGENOM" id="CLU_039307_0_0_1"/>
<dbReference type="InParanoid" id="Q4WM95"/>
<dbReference type="OMA" id="FDEFTWE"/>
<dbReference type="OrthoDB" id="184876at2759"/>
<dbReference type="Proteomes" id="UP000002530">
    <property type="component" value="Chromosome 6"/>
</dbReference>
<dbReference type="GO" id="GO:0005847">
    <property type="term" value="C:mRNA cleavage and polyadenylation specificity factor complex"/>
    <property type="evidence" value="ECO:0000318"/>
    <property type="project" value="GO_Central"/>
</dbReference>
<dbReference type="GO" id="GO:0006397">
    <property type="term" value="P:mRNA processing"/>
    <property type="evidence" value="ECO:0007669"/>
    <property type="project" value="UniProtKB-KW"/>
</dbReference>
<dbReference type="InterPro" id="IPR007854">
    <property type="entry name" value="Fip1_dom"/>
</dbReference>
<dbReference type="InterPro" id="IPR051187">
    <property type="entry name" value="Pre-mRNA_3'-end_processing_reg"/>
</dbReference>
<dbReference type="PANTHER" id="PTHR13484">
    <property type="entry name" value="FIP1-LIKE 1 PROTEIN"/>
    <property type="match status" value="1"/>
</dbReference>
<dbReference type="PANTHER" id="PTHR13484:SF0">
    <property type="entry name" value="PRE-MRNA 3'-END-PROCESSING FACTOR FIP1"/>
    <property type="match status" value="1"/>
</dbReference>
<dbReference type="Pfam" id="PF05182">
    <property type="entry name" value="Fip1"/>
    <property type="match status" value="1"/>
</dbReference>
<name>FIP1_ASPFU</name>
<keyword id="KW-0507">mRNA processing</keyword>
<keyword id="KW-0539">Nucleus</keyword>
<keyword id="KW-1185">Reference proteome</keyword>
<gene>
    <name type="primary">fip1</name>
    <name type="ORF">AFUA_6G10690</name>
</gene>